<organism>
    <name type="scientific">Polypedilum vanderplanki</name>
    <name type="common">Sleeping chironomid midge</name>
    <dbReference type="NCBI Taxonomy" id="319348"/>
    <lineage>
        <taxon>Eukaryota</taxon>
        <taxon>Metazoa</taxon>
        <taxon>Ecdysozoa</taxon>
        <taxon>Arthropoda</taxon>
        <taxon>Hexapoda</taxon>
        <taxon>Insecta</taxon>
        <taxon>Pterygota</taxon>
        <taxon>Neoptera</taxon>
        <taxon>Endopterygota</taxon>
        <taxon>Diptera</taxon>
        <taxon>Nematocera</taxon>
        <taxon>Chironomoidea</taxon>
        <taxon>Chironomidae</taxon>
        <taxon>Chironominae</taxon>
        <taxon>Polypedilum</taxon>
        <taxon>Polypedilum</taxon>
    </lineage>
</organism>
<protein>
    <recommendedName>
        <fullName evidence="4 7">Facilitated trehalose transporter Tret1</fullName>
        <shortName evidence="5">PvTret1</shortName>
    </recommendedName>
</protein>
<dbReference type="EMBL" id="AB272983">
    <property type="protein sequence ID" value="BAF63703.1"/>
    <property type="molecule type" value="mRNA"/>
</dbReference>
<dbReference type="SMR" id="A5LGM7"/>
<dbReference type="TCDB" id="2.A.1.1.129">
    <property type="family name" value="the major facilitator superfamily (mfs)"/>
</dbReference>
<dbReference type="GlyCosmos" id="A5LGM7">
    <property type="glycosylation" value="2 sites, No reported glycans"/>
</dbReference>
<dbReference type="GO" id="GO:0005886">
    <property type="term" value="C:plasma membrane"/>
    <property type="evidence" value="ECO:0000314"/>
    <property type="project" value="UniProtKB"/>
</dbReference>
<dbReference type="GO" id="GO:0051119">
    <property type="term" value="F:sugar transmembrane transporter activity"/>
    <property type="evidence" value="ECO:0007669"/>
    <property type="project" value="InterPro"/>
</dbReference>
<dbReference type="GO" id="GO:0015574">
    <property type="term" value="F:trehalose transmembrane transporter activity"/>
    <property type="evidence" value="ECO:0000314"/>
    <property type="project" value="UniProtKB"/>
</dbReference>
<dbReference type="GO" id="GO:0015771">
    <property type="term" value="P:trehalose transport"/>
    <property type="evidence" value="ECO:0000314"/>
    <property type="project" value="UniProtKB"/>
</dbReference>
<dbReference type="CDD" id="cd17358">
    <property type="entry name" value="MFS_GLUT6_8_Class3_like"/>
    <property type="match status" value="1"/>
</dbReference>
<dbReference type="FunFam" id="1.20.1250.20:FF:000055">
    <property type="entry name" value="Facilitated trehalose transporter Tret1-2 homolog"/>
    <property type="match status" value="1"/>
</dbReference>
<dbReference type="Gene3D" id="1.20.1250.20">
    <property type="entry name" value="MFS general substrate transporter like domains"/>
    <property type="match status" value="1"/>
</dbReference>
<dbReference type="InterPro" id="IPR020846">
    <property type="entry name" value="MFS_dom"/>
</dbReference>
<dbReference type="InterPro" id="IPR044775">
    <property type="entry name" value="MFS_ERD6/Tret1-like"/>
</dbReference>
<dbReference type="InterPro" id="IPR005828">
    <property type="entry name" value="MFS_sugar_transport-like"/>
</dbReference>
<dbReference type="InterPro" id="IPR036259">
    <property type="entry name" value="MFS_trans_sf"/>
</dbReference>
<dbReference type="InterPro" id="IPR050549">
    <property type="entry name" value="MFS_Trehalose_Transporter"/>
</dbReference>
<dbReference type="InterPro" id="IPR003663">
    <property type="entry name" value="Sugar/inositol_transpt"/>
</dbReference>
<dbReference type="InterPro" id="IPR005829">
    <property type="entry name" value="Sugar_transporter_CS"/>
</dbReference>
<dbReference type="NCBIfam" id="TIGR00879">
    <property type="entry name" value="SP"/>
    <property type="match status" value="1"/>
</dbReference>
<dbReference type="PANTHER" id="PTHR48021">
    <property type="match status" value="1"/>
</dbReference>
<dbReference type="PANTHER" id="PTHR48021:SF96">
    <property type="entry name" value="FACILITATED TREHALOSE TRANSPORTER TRET1-1-RELATED"/>
    <property type="match status" value="1"/>
</dbReference>
<dbReference type="Pfam" id="PF00083">
    <property type="entry name" value="Sugar_tr"/>
    <property type="match status" value="1"/>
</dbReference>
<dbReference type="PRINTS" id="PR00171">
    <property type="entry name" value="SUGRTRNSPORT"/>
</dbReference>
<dbReference type="SUPFAM" id="SSF103473">
    <property type="entry name" value="MFS general substrate transporter"/>
    <property type="match status" value="1"/>
</dbReference>
<dbReference type="PROSITE" id="PS50850">
    <property type="entry name" value="MFS"/>
    <property type="match status" value="1"/>
</dbReference>
<dbReference type="PROSITE" id="PS00216">
    <property type="entry name" value="SUGAR_TRANSPORT_1"/>
    <property type="match status" value="1"/>
</dbReference>
<dbReference type="PROSITE" id="PS00217">
    <property type="entry name" value="SUGAR_TRANSPORT_2"/>
    <property type="match status" value="1"/>
</dbReference>
<evidence type="ECO:0000255" key="1"/>
<evidence type="ECO:0000269" key="2">
    <source>
    </source>
</evidence>
<evidence type="ECO:0000269" key="3">
    <source>
    </source>
</evidence>
<evidence type="ECO:0000303" key="4">
    <source>
    </source>
</evidence>
<evidence type="ECO:0000303" key="5">
    <source>
    </source>
</evidence>
<evidence type="ECO:0000305" key="6"/>
<evidence type="ECO:0000312" key="7">
    <source>
        <dbReference type="EMBL" id="BAF63703.1"/>
    </source>
</evidence>
<reference evidence="6 7" key="1">
    <citation type="journal article" date="2007" name="Proc. Natl. Acad. Sci. U.S.A.">
        <title>Trehalose transporter 1, a facilitated and high-capacity trehalose transporter, allows exogenous trehalose uptake into cells.</title>
        <authorList>
            <person name="Kikawada T."/>
            <person name="Saito A."/>
            <person name="Kanamori Y."/>
            <person name="Nakahara Y."/>
            <person name="Iwata K."/>
            <person name="Tanaka D."/>
            <person name="Watanabe M."/>
            <person name="Okuda T."/>
        </authorList>
    </citation>
    <scope>NUCLEOTIDE SEQUENCE [MRNA]</scope>
    <scope>FUNCTION</scope>
    <scope>BIOPHYSICOCHEMICAL PROPERTIES</scope>
    <scope>SUBCELLULAR LOCATION</scope>
    <scope>TISSUE SPECIFICITY</scope>
    <scope>INDUCTION</scope>
</reference>
<reference evidence="6" key="2">
    <citation type="journal article" date="2010" name="Insect Biochem. Mol. Biol.">
        <title>The trehalose transporter 1 gene sequence is conserved in insects and encodes proteins with different kinetic properties involved in trehalose import into peripheral tissues.</title>
        <authorList>
            <person name="Kanamori Y."/>
            <person name="Saito Y."/>
            <person name="Hagiwara-Komoda Y."/>
            <person name="Tanaka D."/>
            <person name="Mitsumasu K."/>
            <person name="Kikuta S."/>
            <person name="Watanabe M."/>
            <person name="Cornette R."/>
            <person name="Kikawada T."/>
            <person name="Okuda T."/>
        </authorList>
    </citation>
    <scope>FUNCTION</scope>
    <scope>BIOPHYSICOCHEMICAL PROPERTIES</scope>
    <scope>SUBCELLULAR LOCATION</scope>
    <scope>TISSUE SPECIFICITY</scope>
</reference>
<sequence length="504" mass="55057">MELNNKEDSPRHTVPFVRQITEDGKAKLEIYRPTTNPIYIYTQILAAIAVSMGSMVVGFASAYTSPALVSMQNTTITSFKVTEQEASWVGGIMPLAGLAGGIAGGPFIEYLGRKNTILATAVPFIVAWLLIAFANSIWMVLAGRALSGFCVGIASLSLPVYLGETVQPEVRGTLGLLPTAFGNIGILICFVAGKYVNWSGLAFIGSILPIPFMVLTLLIPETPRWFVTRGREERARKALQWLRGKKADVEPELKGIVKSHCEAERHASQNAIFDLMKRSNLKPLLIALGLMFFQQLSGINAVIFYTVSIFKDAGSTIDENLCTIIVGVVNFGATFFATVLIDRLGRKILLYISEVAMVITLLTLGTFFYYKNSGNDVSNIGWLPLASFVIYVIGFSSGVGPIPWLMLGEILPGKIRGSAASVATGFNWTCTFIVTKTFADIVAAIGNHGAFWFFGVICLIGLFFVIFFVPETQGKSLEEIERKMMGRVRRMSSVANMKPLSFNM</sequence>
<name>TRET1_POLVA</name>
<accession>A5LGM7</accession>
<feature type="chain" id="PRO_0000395551" description="Facilitated trehalose transporter Tret1">
    <location>
        <begin position="1"/>
        <end position="504"/>
    </location>
</feature>
<feature type="topological domain" description="Cytoplasmic" evidence="1">
    <location>
        <begin position="1"/>
        <end position="39"/>
    </location>
</feature>
<feature type="transmembrane region" description="Helical; Name=1" evidence="1">
    <location>
        <begin position="40"/>
        <end position="60"/>
    </location>
</feature>
<feature type="topological domain" description="Extracellular" evidence="1">
    <location>
        <begin position="61"/>
        <end position="87"/>
    </location>
</feature>
<feature type="transmembrane region" description="Helical; Name=2" evidence="1">
    <location>
        <begin position="88"/>
        <end position="108"/>
    </location>
</feature>
<feature type="topological domain" description="Cytoplasmic" evidence="1">
    <location>
        <begin position="109"/>
        <end position="120"/>
    </location>
</feature>
<feature type="transmembrane region" description="Helical; Name=3" evidence="1">
    <location>
        <begin position="121"/>
        <end position="141"/>
    </location>
</feature>
<feature type="topological domain" description="Extracellular" evidence="1">
    <location>
        <begin position="142"/>
        <end position="145"/>
    </location>
</feature>
<feature type="transmembrane region" description="Helical; Name=4" evidence="1">
    <location>
        <begin position="146"/>
        <end position="166"/>
    </location>
</feature>
<feature type="topological domain" description="Cytoplasmic" evidence="1">
    <location>
        <begin position="167"/>
        <end position="171"/>
    </location>
</feature>
<feature type="transmembrane region" description="Helical; Name=5" evidence="1">
    <location>
        <begin position="172"/>
        <end position="192"/>
    </location>
</feature>
<feature type="topological domain" description="Extracellular" evidence="1">
    <location>
        <begin position="193"/>
        <end position="199"/>
    </location>
</feature>
<feature type="transmembrane region" description="Helical; Name=6" evidence="1">
    <location>
        <begin position="200"/>
        <end position="220"/>
    </location>
</feature>
<feature type="topological domain" description="Cytoplasmic" evidence="1">
    <location>
        <begin position="221"/>
        <end position="283"/>
    </location>
</feature>
<feature type="transmembrane region" description="Helical; Name=7" evidence="1">
    <location>
        <begin position="284"/>
        <end position="304"/>
    </location>
</feature>
<feature type="topological domain" description="Extracellular" evidence="1">
    <location>
        <begin position="305"/>
        <end position="320"/>
    </location>
</feature>
<feature type="transmembrane region" description="Helical; Name=8" evidence="1">
    <location>
        <begin position="321"/>
        <end position="341"/>
    </location>
</feature>
<feature type="topological domain" description="Cytoplasmic" evidence="1">
    <location>
        <begin position="342"/>
        <end position="347"/>
    </location>
</feature>
<feature type="transmembrane region" description="Helical; Name=9" evidence="1">
    <location>
        <begin position="348"/>
        <end position="368"/>
    </location>
</feature>
<feature type="topological domain" description="Extracellular" evidence="1">
    <location>
        <begin position="369"/>
        <end position="387"/>
    </location>
</feature>
<feature type="transmembrane region" description="Helical; Name=10" evidence="1">
    <location>
        <begin position="388"/>
        <end position="408"/>
    </location>
</feature>
<feature type="topological domain" description="Cytoplasmic" evidence="1">
    <location>
        <begin position="409"/>
        <end position="424"/>
    </location>
</feature>
<feature type="transmembrane region" description="Helical; Name=11" evidence="1">
    <location>
        <begin position="425"/>
        <end position="445"/>
    </location>
</feature>
<feature type="topological domain" description="Extracellular" evidence="1">
    <location>
        <begin position="446"/>
        <end position="448"/>
    </location>
</feature>
<feature type="transmembrane region" description="Helical; Name=12" evidence="1">
    <location>
        <begin position="449"/>
        <end position="469"/>
    </location>
</feature>
<feature type="topological domain" description="Cytoplasmic" evidence="1">
    <location>
        <begin position="470"/>
        <end position="504"/>
    </location>
</feature>
<feature type="glycosylation site" description="N-linked (GlcNAc...) asparagine" evidence="1">
    <location>
        <position position="73"/>
    </location>
</feature>
<feature type="glycosylation site" description="N-linked (GlcNAc...) asparagine" evidence="1">
    <location>
        <position position="197"/>
    </location>
</feature>
<proteinExistence type="evidence at protein level"/>
<keyword id="KW-1003">Cell membrane</keyword>
<keyword id="KW-0325">Glycoprotein</keyword>
<keyword id="KW-0472">Membrane</keyword>
<keyword id="KW-0346">Stress response</keyword>
<keyword id="KW-0762">Sugar transport</keyword>
<keyword id="KW-0812">Transmembrane</keyword>
<keyword id="KW-1133">Transmembrane helix</keyword>
<keyword id="KW-0813">Transport</keyword>
<gene>
    <name evidence="7" type="primary">Tret1</name>
</gene>
<comment type="function">
    <text evidence="2 3">High-capacity facilitative transporter for trehalose, required to induce anhydrobiosis. Anhydrobiotic larvae can survive almost complete dehydration. Does not transport maltose, sucrose or lactose. Mediates the bidirectional transfer of trehalose. Responsible for the transport of trehalose synthesized in the fat body and the incorporation of trehalose into other tissues that require a carbon source, thereby regulating trehalose levels in the hemolymph.</text>
</comment>
<comment type="biophysicochemical properties">
    <kinetics>
        <KM evidence="2 3">114.5 mM for trehalose</KM>
    </kinetics>
    <phDependence>
        <text evidence="2 3">Wide extracellular pH range, between 4.0 and 9.0.</text>
    </phDependence>
</comment>
<comment type="subcellular location">
    <subcellularLocation>
        <location evidence="2 3">Cell membrane</location>
        <topology evidence="1 2 3">Multi-pass membrane protein</topology>
    </subcellularLocation>
</comment>
<comment type="tissue specificity">
    <text evidence="2 3">Highest expression in the fat body. Not expressed in other tissues including the midgut, muscle, and integuments after 24 hours of dehydration.</text>
</comment>
<comment type="induction">
    <text evidence="2">By hypersalinity.</text>
</comment>
<comment type="similarity">
    <text evidence="1 2">Belongs to the major facilitator superfamily. Sugar transporter (TC 2.A.1.1) family. Trehalose transporter subfamily.</text>
</comment>